<gene>
    <name evidence="4" type="primary">Xt-cdh</name>
</gene>
<protein>
    <recommendedName>
        <fullName evidence="4 5">L-carnitine dehydrogenase</fullName>
        <shortName evidence="4">CDH</shortName>
        <shortName evidence="1">L-CDH</shortName>
        <ecNumber evidence="2 3">1.1.1.108</ecNumber>
    </recommendedName>
</protein>
<dbReference type="EC" id="1.1.1.108" evidence="2 3"/>
<dbReference type="EMBL" id="AB537424">
    <property type="protein sequence ID" value="BAJ10560.1"/>
    <property type="molecule type" value="Genomic_DNA"/>
</dbReference>
<dbReference type="SMR" id="D7URM0"/>
<dbReference type="SABIO-RK" id="D7URM0"/>
<dbReference type="UniPathway" id="UPA00117"/>
<dbReference type="GO" id="GO:0005737">
    <property type="term" value="C:cytoplasm"/>
    <property type="evidence" value="ECO:0000314"/>
    <property type="project" value="UniProtKB"/>
</dbReference>
<dbReference type="GO" id="GO:0047728">
    <property type="term" value="F:carnitine 3-dehydrogenase activity"/>
    <property type="evidence" value="ECO:0000314"/>
    <property type="project" value="UniProtKB"/>
</dbReference>
<dbReference type="GO" id="GO:0051287">
    <property type="term" value="F:NAD binding"/>
    <property type="evidence" value="ECO:0000314"/>
    <property type="project" value="UniProtKB"/>
</dbReference>
<dbReference type="GO" id="GO:0070403">
    <property type="term" value="F:NAD+ binding"/>
    <property type="evidence" value="ECO:0007669"/>
    <property type="project" value="InterPro"/>
</dbReference>
<dbReference type="GO" id="GO:0042413">
    <property type="term" value="P:carnitine catabolic process"/>
    <property type="evidence" value="ECO:0000314"/>
    <property type="project" value="UniProtKB"/>
</dbReference>
<dbReference type="GO" id="GO:0006631">
    <property type="term" value="P:fatty acid metabolic process"/>
    <property type="evidence" value="ECO:0007669"/>
    <property type="project" value="InterPro"/>
</dbReference>
<dbReference type="FunFam" id="1.10.1040.10:FF:000027">
    <property type="entry name" value="L-carnitine dehydrogenase"/>
    <property type="match status" value="1"/>
</dbReference>
<dbReference type="FunFam" id="3.40.50.720:FF:000522">
    <property type="entry name" value="L-carnitine dehydrogenase"/>
    <property type="match status" value="1"/>
</dbReference>
<dbReference type="Gene3D" id="1.10.1040.10">
    <property type="entry name" value="N-(1-d-carboxylethyl)-l-norvaline Dehydrogenase, domain 2"/>
    <property type="match status" value="1"/>
</dbReference>
<dbReference type="Gene3D" id="3.40.50.720">
    <property type="entry name" value="NAD(P)-binding Rossmann-like Domain"/>
    <property type="match status" value="1"/>
</dbReference>
<dbReference type="HAMAP" id="MF_02129">
    <property type="entry name" value="L_carnitine_dehydrog"/>
    <property type="match status" value="1"/>
</dbReference>
<dbReference type="InterPro" id="IPR006176">
    <property type="entry name" value="3-OHacyl-CoA_DH_NAD-bd"/>
</dbReference>
<dbReference type="InterPro" id="IPR006108">
    <property type="entry name" value="3HC_DH_C"/>
</dbReference>
<dbReference type="InterPro" id="IPR008927">
    <property type="entry name" value="6-PGluconate_DH-like_C_sf"/>
</dbReference>
<dbReference type="InterPro" id="IPR013328">
    <property type="entry name" value="6PGD_dom2"/>
</dbReference>
<dbReference type="InterPro" id="IPR026578">
    <property type="entry name" value="L-carnitine_dehydrogenase"/>
</dbReference>
<dbReference type="InterPro" id="IPR036291">
    <property type="entry name" value="NAD(P)-bd_dom_sf"/>
</dbReference>
<dbReference type="NCBIfam" id="NF005471">
    <property type="entry name" value="PRK07066.1"/>
    <property type="match status" value="1"/>
</dbReference>
<dbReference type="PANTHER" id="PTHR48075">
    <property type="entry name" value="3-HYDROXYACYL-COA DEHYDROGENASE FAMILY PROTEIN"/>
    <property type="match status" value="1"/>
</dbReference>
<dbReference type="PANTHER" id="PTHR48075:SF5">
    <property type="entry name" value="3-HYDROXYBUTYRYL-COA DEHYDROGENASE"/>
    <property type="match status" value="1"/>
</dbReference>
<dbReference type="Pfam" id="PF00725">
    <property type="entry name" value="3HCDH"/>
    <property type="match status" value="1"/>
</dbReference>
<dbReference type="Pfam" id="PF02737">
    <property type="entry name" value="3HCDH_N"/>
    <property type="match status" value="1"/>
</dbReference>
<dbReference type="SUPFAM" id="SSF48179">
    <property type="entry name" value="6-phosphogluconate dehydrogenase C-terminal domain-like"/>
    <property type="match status" value="1"/>
</dbReference>
<dbReference type="SUPFAM" id="SSF51735">
    <property type="entry name" value="NAD(P)-binding Rossmann-fold domains"/>
    <property type="match status" value="1"/>
</dbReference>
<keyword id="KW-0963">Cytoplasm</keyword>
<keyword id="KW-0903">Direct protein sequencing</keyword>
<keyword id="KW-0520">NAD</keyword>
<keyword id="KW-0560">Oxidoreductase</keyword>
<accession>D7URM0</accession>
<name>LCDH_PSESP</name>
<sequence length="321" mass="34755">MPFITHIKTFAALGSGVIGSGWVARALAHGLDVIAWDPAPGAEQALRQRVANAWPALEKQGLAAGAAQHRLSFVSSIEECVRDADFIQESAPERLDLKLDLHAKISAAAKPDAIIASSTSGLLPSEFYESSSHPERCVVGHPFNPVYLLPLVEIVGGRHTAPEAIEAAKGIYTELGMRPLHVRKEVPGFIADRLLEALWREALHLVNDGVATTGEIDDAIRFGAGLRWSFMGTFLTYTLAGGDAGMRHFMQQFGPALKLPWTYLPAPELTERLIDEVVDGTAAQVGERSIAELERYRDDTLLAVLEAIGTSKAKHGMTFSE</sequence>
<comment type="function">
    <text evidence="2 3 7">Catalyzes the NAD(+)-dependent oxidation of L-carnitine to 3-dehydrocarnitine (PubMed:20530902, Ref.2). Is specific for L-carnitine and NAD(+) as substrates since D-carnitine, other carnitine analogs such as choline and betaine, and NADP(+) are not substrates (Ref.2). Despite a high similarity to 3-hydroxyacyl-CoA dehydrogenases, cannot dehydrogenate 3-hydroxybutylate and 3-hydroxybutyl-CoA (PubMed:20530902). Is probably involved in a L-carnitine degradation pathway that allows Pseudomonas sp. strain NBRC 13558 to grow on L-carnitine as the sole source of carbon and nitrogen (Probable).</text>
</comment>
<comment type="catalytic activity">
    <reaction evidence="2 3">
        <text>carnitine + NAD(+) = 3-dehydrocarnitine + NADH + H(+)</text>
        <dbReference type="Rhea" id="RHEA:19265"/>
        <dbReference type="ChEBI" id="CHEBI:15378"/>
        <dbReference type="ChEBI" id="CHEBI:17126"/>
        <dbReference type="ChEBI" id="CHEBI:57540"/>
        <dbReference type="ChEBI" id="CHEBI:57885"/>
        <dbReference type="ChEBI" id="CHEBI:57945"/>
        <dbReference type="EC" id="1.1.1.108"/>
    </reaction>
    <physiologicalReaction direction="left-to-right" evidence="7">
        <dbReference type="Rhea" id="RHEA:19266"/>
    </physiologicalReaction>
</comment>
<comment type="activity regulation">
    <text evidence="3">The enzyme activity is strongly inhibited by Ag(+), Ni(+), Hg(+), and p-chloromercuribenzoate, and partially inhibited by Li(+), Ca(2+), Mn(2+), Co(2+), Cu(2+), and Zn(2+).</text>
</comment>
<comment type="biophysicochemical properties">
    <kinetics>
        <KM evidence="3">10 mM for L-carnithine</KM>
        <KM evidence="2">8.5 mM for L-carnithine</KM>
        <KM evidence="3">0.25 mM for NAD(+)</KM>
        <KM evidence="2">0.24 mM for NAD(+)</KM>
        <KM evidence="3">1.71 mM for 3-dehydrocarnitine</KM>
        <KM evidence="2">4.5 mM for 3-dehydrocarnitine</KM>
        <KM evidence="3">0.04 mM for NADH</KM>
        <Vmax evidence="2">21.9 umol/min/mg enzyme</Vmax>
        <text evidence="2 3">Part of the values are for the recombinant protein expressed in E.coli (PubMed:20530902). Other values are for the wild-type protein (Ref.2).</text>
    </kinetics>
    <phDependence>
        <text evidence="3">Optimum pH is 9.5 for the oxidation reaction and 6.5 for the reduction reaction.</text>
    </phDependence>
</comment>
<comment type="pathway">
    <text evidence="6">Amine and polyamine metabolism; carnitine metabolism.</text>
</comment>
<comment type="subunit">
    <text evidence="3">Homodimer.</text>
</comment>
<comment type="subcellular location">
    <subcellularLocation>
        <location evidence="2">Cytoplasm</location>
    </subcellularLocation>
</comment>
<comment type="similarity">
    <text evidence="1 6">Belongs to the 3-hydroxyacyl-CoA dehydrogenase family. L-carnitine dehydrogenase subfamily.</text>
</comment>
<reference key="1">
    <citation type="journal article" date="2010" name="Biosci. Biotechnol. Biochem.">
        <title>Biochemical characterization of L-carnitine dehydrogenases from Rhizobium sp. and Xanthomonas translucens.</title>
        <authorList>
            <person name="Arima J."/>
            <person name="Uesumi A."/>
            <person name="Mitsuzumi H."/>
            <person name="Mori N."/>
        </authorList>
    </citation>
    <scope>NUCLEOTIDE SEQUENCE [GENOMIC DNA]</scope>
    <scope>PROTEIN SEQUENCE OF 1-10</scope>
    <scope>FUNCTION</scope>
    <scope>CATALYTIC ACTIVITY</scope>
    <scope>SUBSTRATE SPECIFICITY</scope>
    <scope>KINETIC PARAMETERS</scope>
    <scope>SUBCELLULAR LOCATION</scope>
    <scope>MUTAGENESIS OF 317-MET--GLU-321</scope>
    <source>
        <strain>NBRC 13558</strain>
    </source>
</reference>
<reference key="2">
    <citation type="journal article" date="1988" name="Agric. Biol. Chem.">
        <title>Purification and some properties of carnitine dehydrogenase from Xanthomonas translucens.</title>
        <authorList>
            <person name="Mori N."/>
            <person name="Kasugai T."/>
            <person name="Kitamoto Y."/>
            <person name="Ichikawa Y."/>
        </authorList>
    </citation>
    <scope>FUNCTION</scope>
    <scope>CATALYTIC ACTIVITY</scope>
    <scope>SUBSTRATE SPECIFICITY</scope>
    <scope>ACTIVITY REGULATION</scope>
    <scope>BIOPHYSICOCHEMICAL PROPERTIES</scope>
    <scope>SUBUNIT</scope>
    <source>
        <strain>NBRC 13558</strain>
    </source>
</reference>
<organism>
    <name type="scientific">Pseudomonas sp</name>
    <dbReference type="NCBI Taxonomy" id="306"/>
    <lineage>
        <taxon>Bacteria</taxon>
        <taxon>Pseudomonadati</taxon>
        <taxon>Pseudomonadota</taxon>
        <taxon>Gammaproteobacteria</taxon>
        <taxon>Pseudomonadales</taxon>
        <taxon>Pseudomonadaceae</taxon>
        <taxon>Pseudomonas</taxon>
    </lineage>
</organism>
<proteinExistence type="evidence at protein level"/>
<feature type="chain" id="PRO_0000417911" description="L-carnitine dehydrogenase">
    <location>
        <begin position="1"/>
        <end position="321"/>
    </location>
</feature>
<feature type="region of interest" description="Important for catalytic activity" evidence="7">
    <location>
        <begin position="317"/>
        <end position="321"/>
    </location>
</feature>
<feature type="binding site" evidence="1">
    <location>
        <begin position="14"/>
        <end position="19"/>
    </location>
    <ligand>
        <name>NAD(+)</name>
        <dbReference type="ChEBI" id="CHEBI:57540"/>
    </ligand>
</feature>
<feature type="mutagenesis site" description="Marked decrease in catalytic activity." evidence="2">
    <location>
        <begin position="317"/>
        <end position="321"/>
    </location>
</feature>
<evidence type="ECO:0000255" key="1">
    <source>
        <dbReference type="HAMAP-Rule" id="MF_02129"/>
    </source>
</evidence>
<evidence type="ECO:0000269" key="2">
    <source>
    </source>
</evidence>
<evidence type="ECO:0000269" key="3">
    <source ref="2"/>
</evidence>
<evidence type="ECO:0000303" key="4">
    <source>
    </source>
</evidence>
<evidence type="ECO:0000303" key="5">
    <source ref="2"/>
</evidence>
<evidence type="ECO:0000305" key="6"/>
<evidence type="ECO:0000305" key="7">
    <source>
    </source>
</evidence>